<reference key="1">
    <citation type="submission" date="1998-10" db="UniProtKB">
        <authorList>
            <person name="Takahashi M."/>
            <person name="Quicke D.L.J."/>
        </authorList>
    </citation>
    <scope>PROTEIN SEQUENCE</scope>
    <source>
        <tissue>Larva</tissue>
    </source>
</reference>
<accession>P81532</accession>
<keyword id="KW-0903">Direct protein sequencing</keyword>
<protein>
    <recommendedName>
        <fullName>MP1 protein</fullName>
    </recommendedName>
</protein>
<name>MP1_MICOC</name>
<evidence type="ECO:0000305" key="1"/>
<sequence length="13" mass="1595">QWFGPYPPVNYIN</sequence>
<feature type="chain" id="PRO_0000096547" description="MP1 protein">
    <location>
        <begin position="1"/>
        <end position="13"/>
    </location>
</feature>
<feature type="non-consecutive residues" evidence="1">
    <location>
        <begin position="10"/>
        <end position="11"/>
    </location>
</feature>
<proteinExistence type="evidence at protein level"/>
<comment type="tissue specificity">
    <text>Salivary glands.</text>
</comment>
<comment type="developmental stage">
    <text>Larval.</text>
</comment>
<organism>
    <name type="scientific">Microplitis ocellatae</name>
    <name type="common">Braconid wasp</name>
    <dbReference type="NCBI Taxonomy" id="99573"/>
    <lineage>
        <taxon>Eukaryota</taxon>
        <taxon>Metazoa</taxon>
        <taxon>Ecdysozoa</taxon>
        <taxon>Arthropoda</taxon>
        <taxon>Hexapoda</taxon>
        <taxon>Insecta</taxon>
        <taxon>Pterygota</taxon>
        <taxon>Neoptera</taxon>
        <taxon>Endopterygota</taxon>
        <taxon>Hymenoptera</taxon>
        <taxon>Apocrita</taxon>
        <taxon>Ichneumonoidea</taxon>
        <taxon>Braconidae</taxon>
        <taxon>Microgastrinae</taxon>
        <taxon>Microplitis</taxon>
    </lineage>
</organism>